<comment type="function">
    <text evidence="1">Involved in targeting and insertion of nascent membrane proteins into the cytoplasmic membrane. Binds directly to 7S RNA and mediates binding of the 54 kDa subunit of the SRP.</text>
</comment>
<comment type="subunit">
    <text evidence="1">Part of the signal recognition particle protein translocation system, which is composed of SRP and FtsY. Archaeal SRP consists of a 7S RNA molecule of 300 nucleotides and two protein subunits: SRP54 and SRP19.</text>
</comment>
<comment type="subcellular location">
    <subcellularLocation>
        <location evidence="1">Cytoplasm</location>
    </subcellularLocation>
</comment>
<comment type="similarity">
    <text evidence="1">Belongs to the SRP19 family.</text>
</comment>
<evidence type="ECO:0000255" key="1">
    <source>
        <dbReference type="HAMAP-Rule" id="MF_00305"/>
    </source>
</evidence>
<feature type="chain" id="PRO_0000300753" description="Signal recognition particle 19 kDa protein">
    <location>
        <begin position="1"/>
        <end position="95"/>
    </location>
</feature>
<dbReference type="EMBL" id="CP000575">
    <property type="protein sequence ID" value="ABN70340.1"/>
    <property type="molecule type" value="Genomic_DNA"/>
</dbReference>
<dbReference type="RefSeq" id="WP_011839531.1">
    <property type="nucleotide sequence ID" value="NC_009033.1"/>
</dbReference>
<dbReference type="SMR" id="A3DNY0"/>
<dbReference type="STRING" id="399550.Smar_1248"/>
<dbReference type="GeneID" id="4906977"/>
<dbReference type="KEGG" id="smr:Smar_1248"/>
<dbReference type="eggNOG" id="arCOG01217">
    <property type="taxonomic scope" value="Archaea"/>
</dbReference>
<dbReference type="HOGENOM" id="CLU_169299_1_0_2"/>
<dbReference type="OrthoDB" id="56356at2157"/>
<dbReference type="Proteomes" id="UP000000254">
    <property type="component" value="Chromosome"/>
</dbReference>
<dbReference type="GO" id="GO:0048500">
    <property type="term" value="C:signal recognition particle"/>
    <property type="evidence" value="ECO:0007669"/>
    <property type="project" value="UniProtKB-UniRule"/>
</dbReference>
<dbReference type="GO" id="GO:0008312">
    <property type="term" value="F:7S RNA binding"/>
    <property type="evidence" value="ECO:0007669"/>
    <property type="project" value="UniProtKB-UniRule"/>
</dbReference>
<dbReference type="GO" id="GO:0006617">
    <property type="term" value="P:SRP-dependent cotranslational protein targeting to membrane, signal sequence recognition"/>
    <property type="evidence" value="ECO:0007669"/>
    <property type="project" value="TreeGrafter"/>
</dbReference>
<dbReference type="Gene3D" id="3.30.56.30">
    <property type="entry name" value="Signal recognition particle, SRP19-like subunit"/>
    <property type="match status" value="1"/>
</dbReference>
<dbReference type="HAMAP" id="MF_00305">
    <property type="entry name" value="SRP19"/>
    <property type="match status" value="1"/>
</dbReference>
<dbReference type="InterPro" id="IPR002778">
    <property type="entry name" value="Signal_recog_particle_SRP19"/>
</dbReference>
<dbReference type="InterPro" id="IPR036521">
    <property type="entry name" value="SRP19-like_sf"/>
</dbReference>
<dbReference type="InterPro" id="IPR022938">
    <property type="entry name" value="SRP19_arc-type"/>
</dbReference>
<dbReference type="NCBIfam" id="NF001973">
    <property type="entry name" value="PRK00754.1"/>
    <property type="match status" value="1"/>
</dbReference>
<dbReference type="PANTHER" id="PTHR17453">
    <property type="entry name" value="SIGNAL RECOGNITION PARTICLE 19 KD PROTEIN"/>
    <property type="match status" value="1"/>
</dbReference>
<dbReference type="PANTHER" id="PTHR17453:SF0">
    <property type="entry name" value="SIGNAL RECOGNITION PARTICLE 19 KDA PROTEIN"/>
    <property type="match status" value="1"/>
</dbReference>
<dbReference type="Pfam" id="PF01922">
    <property type="entry name" value="SRP19"/>
    <property type="match status" value="1"/>
</dbReference>
<dbReference type="SUPFAM" id="SSF69695">
    <property type="entry name" value="SRP19"/>
    <property type="match status" value="1"/>
</dbReference>
<keyword id="KW-0963">Cytoplasm</keyword>
<keyword id="KW-1185">Reference proteome</keyword>
<keyword id="KW-0687">Ribonucleoprotein</keyword>
<keyword id="KW-0694">RNA-binding</keyword>
<keyword id="KW-0733">Signal recognition particle</keyword>
<name>SRP19_STAMF</name>
<gene>
    <name evidence="1" type="primary">srp19</name>
    <name type="ordered locus">Smar_1248</name>
</gene>
<protein>
    <recommendedName>
        <fullName evidence="1">Signal recognition particle 19 kDa protein</fullName>
        <shortName evidence="1">SRP19</shortName>
    </recommendedName>
</protein>
<sequence>MSRDYKGKKIVIYPQYIDSSIPRSRGRRIPRNIAIPKPRIEEIIEAAEELGLNPKYEESAYPKHWWIKGRIVVDKVGSKLNTLKLIAQKIKDLRK</sequence>
<reference key="1">
    <citation type="journal article" date="2009" name="BMC Genomics">
        <title>The complete genome sequence of Staphylothermus marinus reveals differences in sulfur metabolism among heterotrophic Crenarchaeota.</title>
        <authorList>
            <person name="Anderson I.J."/>
            <person name="Dharmarajan L."/>
            <person name="Rodriguez J."/>
            <person name="Hooper S."/>
            <person name="Porat I."/>
            <person name="Ulrich L.E."/>
            <person name="Elkins J.G."/>
            <person name="Mavromatis K."/>
            <person name="Sun H."/>
            <person name="Land M."/>
            <person name="Lapidus A."/>
            <person name="Lucas S."/>
            <person name="Barry K."/>
            <person name="Huber H."/>
            <person name="Zhulin I.B."/>
            <person name="Whitman W.B."/>
            <person name="Mukhopadhyay B."/>
            <person name="Woese C."/>
            <person name="Bristow J."/>
            <person name="Kyrpides N."/>
        </authorList>
    </citation>
    <scope>NUCLEOTIDE SEQUENCE [LARGE SCALE GENOMIC DNA]</scope>
    <source>
        <strain>ATCC 43588 / DSM 3639 / JCM 9404 / F1</strain>
    </source>
</reference>
<reference key="2">
    <citation type="journal article" date="2009" name="Stand. Genomic Sci.">
        <title>Complete genome sequence of Staphylothermus marinus Stetter and Fiala 1986 type strain F1.</title>
        <authorList>
            <person name="Anderson I.J."/>
            <person name="Sun H."/>
            <person name="Lapidus A."/>
            <person name="Copeland A."/>
            <person name="Glavina Del Rio T."/>
            <person name="Tice H."/>
            <person name="Dalin E."/>
            <person name="Lucas S."/>
            <person name="Barry K."/>
            <person name="Land M."/>
            <person name="Richardson P."/>
            <person name="Huber H."/>
            <person name="Kyrpides N.C."/>
        </authorList>
    </citation>
    <scope>NUCLEOTIDE SEQUENCE [LARGE SCALE GENOMIC DNA]</scope>
    <source>
        <strain>ATCC 43588 / DSM 3639 / JCM 9404 / F1</strain>
    </source>
</reference>
<proteinExistence type="inferred from homology"/>
<accession>A3DNY0</accession>
<organism>
    <name type="scientific">Staphylothermus marinus (strain ATCC 43588 / DSM 3639 / JCM 9404 / F1)</name>
    <dbReference type="NCBI Taxonomy" id="399550"/>
    <lineage>
        <taxon>Archaea</taxon>
        <taxon>Thermoproteota</taxon>
        <taxon>Thermoprotei</taxon>
        <taxon>Desulfurococcales</taxon>
        <taxon>Desulfurococcaceae</taxon>
        <taxon>Staphylothermus</taxon>
    </lineage>
</organism>